<evidence type="ECO:0000250" key="1"/>
<evidence type="ECO:0000250" key="2">
    <source>
        <dbReference type="UniProtKB" id="Q8N823"/>
    </source>
</evidence>
<evidence type="ECO:0000255" key="3">
    <source>
        <dbReference type="PROSITE-ProRule" id="PRU00042"/>
    </source>
</evidence>
<evidence type="ECO:0000255" key="4">
    <source>
        <dbReference type="PROSITE-ProRule" id="PRU00119"/>
    </source>
</evidence>
<evidence type="ECO:0000305" key="5"/>
<evidence type="ECO:0000312" key="6">
    <source>
        <dbReference type="HGNC" id="HGNC:38695"/>
    </source>
</evidence>
<name>ZN888_HUMAN</name>
<protein>
    <recommendedName>
        <fullName evidence="5">Zinc finger protein 888</fullName>
    </recommendedName>
</protein>
<gene>
    <name evidence="6" type="primary">ZNF888</name>
</gene>
<keyword id="KW-0238">DNA-binding</keyword>
<keyword id="KW-1017">Isopeptide bond</keyword>
<keyword id="KW-0479">Metal-binding</keyword>
<keyword id="KW-0539">Nucleus</keyword>
<keyword id="KW-1267">Proteomics identification</keyword>
<keyword id="KW-1185">Reference proteome</keyword>
<keyword id="KW-0677">Repeat</keyword>
<keyword id="KW-0804">Transcription</keyword>
<keyword id="KW-0805">Transcription regulation</keyword>
<keyword id="KW-0832">Ubl conjugation</keyword>
<keyword id="KW-0862">Zinc</keyword>
<keyword id="KW-0863">Zinc-finger</keyword>
<sequence length="718" mass="83549">MALPQGLLTFRDVAIEFSQEEWKCLDPAQRTLYRDVMLENYRNLVSLDISSKCMMEFSSIGKGNTEVIHTGTLQRLASHHIGECCFQEIEKDIHDFVFQWQEDETNGHEAPMTEIKELTGSTDQYDQRHAGNKPIKYQLGSSFHSHLPELHIFQPEGKIGNQLEKSINNASSVSTSQRISCRPKTHISNNYGNNFFHSSLLTQKQDVHRKEKSFQFNESGKSFNCSSLFKKHQIIHLGEKQYKCDVCGKDFNQKRYLAHHRRCHTGEKPYMCNKCGKVFNKKAYLARHYRRHTGEKPYKCNECGKTFSDKSALLVHKTIHTGEKPYKCNECGKVFNQQSNLARHHRVHTGEKPYQCKECDKVFSRKSYLERHRRIHTGEKPYKCKVCDKAFRHDSHLAQHIVIHTREKPYKCNECGKTFGENSALLVHKTIHTGEKPYKCNECGKVFNQQSNLARHHRLHTGEKPYKCKECDKVFSRKSHLERHRRIHTGEKPYKCKVCDKAFRRDSHLAQHTVIHTGEKPYKCNECGKTFVQNSSLVMHKVIHTGEKRYKCNECGKSFNHKSSLAYHHRLHTGEKPYKCNECGKVFRTQSQLACHHRLHTGEKPYKCEECDKVFNIKSHLEIHRRVHTGEKPYKCRVCDKAFGRDSYLAQHQRVHTGEKPYKCKVCDKAFKCYSHLAQHTRIHTGEKPFKCSECGKAFRAQSTLIHHQAIHGVGKLD</sequence>
<comment type="function">
    <text evidence="1">May be involved in transcriptional regulation.</text>
</comment>
<comment type="subcellular location">
    <subcellularLocation>
        <location evidence="1">Nucleus</location>
    </subcellularLocation>
</comment>
<comment type="similarity">
    <text evidence="5">Belongs to the krueppel C2H2-type zinc-finger protein family.</text>
</comment>
<organism>
    <name type="scientific">Homo sapiens</name>
    <name type="common">Human</name>
    <dbReference type="NCBI Taxonomy" id="9606"/>
    <lineage>
        <taxon>Eukaryota</taxon>
        <taxon>Metazoa</taxon>
        <taxon>Chordata</taxon>
        <taxon>Craniata</taxon>
        <taxon>Vertebrata</taxon>
        <taxon>Euteleostomi</taxon>
        <taxon>Mammalia</taxon>
        <taxon>Eutheria</taxon>
        <taxon>Euarchontoglires</taxon>
        <taxon>Primates</taxon>
        <taxon>Haplorrhini</taxon>
        <taxon>Catarrhini</taxon>
        <taxon>Hominidae</taxon>
        <taxon>Homo</taxon>
    </lineage>
</organism>
<proteinExistence type="evidence at protein level"/>
<feature type="chain" id="PRO_0000404597" description="Zinc finger protein 888">
    <location>
        <begin position="1"/>
        <end position="718"/>
    </location>
</feature>
<feature type="domain" description="KRAB" evidence="4">
    <location>
        <begin position="8"/>
        <end position="79"/>
    </location>
</feature>
<feature type="zinc finger region" description="C2H2-type 1; degenerate" evidence="3">
    <location>
        <begin position="214"/>
        <end position="236"/>
    </location>
</feature>
<feature type="zinc finger region" description="C2H2-type 2" evidence="3">
    <location>
        <begin position="242"/>
        <end position="264"/>
    </location>
</feature>
<feature type="zinc finger region" description="C2H2-type 3" evidence="3">
    <location>
        <begin position="270"/>
        <end position="292"/>
    </location>
</feature>
<feature type="zinc finger region" description="C2H2-type 4" evidence="3">
    <location>
        <begin position="298"/>
        <end position="320"/>
    </location>
</feature>
<feature type="zinc finger region" description="C2H2-type 5" evidence="3">
    <location>
        <begin position="326"/>
        <end position="348"/>
    </location>
</feature>
<feature type="zinc finger region" description="C2H2-type 6" evidence="3">
    <location>
        <begin position="354"/>
        <end position="376"/>
    </location>
</feature>
<feature type="zinc finger region" description="C2H2-type 7" evidence="3">
    <location>
        <begin position="382"/>
        <end position="404"/>
    </location>
</feature>
<feature type="zinc finger region" description="C2H2-type 8" evidence="3">
    <location>
        <begin position="410"/>
        <end position="432"/>
    </location>
</feature>
<feature type="zinc finger region" description="C2H2-type 9" evidence="3">
    <location>
        <begin position="438"/>
        <end position="460"/>
    </location>
</feature>
<feature type="zinc finger region" description="C2H2-type 10" evidence="3">
    <location>
        <begin position="466"/>
        <end position="488"/>
    </location>
</feature>
<feature type="zinc finger region" description="C2H2-type 11" evidence="3">
    <location>
        <begin position="494"/>
        <end position="516"/>
    </location>
</feature>
<feature type="zinc finger region" description="C2H2-type 12" evidence="3">
    <location>
        <begin position="522"/>
        <end position="544"/>
    </location>
</feature>
<feature type="zinc finger region" description="C2H2-type 13" evidence="3">
    <location>
        <begin position="550"/>
        <end position="572"/>
    </location>
</feature>
<feature type="zinc finger region" description="C2H2-type 14" evidence="3">
    <location>
        <begin position="578"/>
        <end position="600"/>
    </location>
</feature>
<feature type="zinc finger region" description="C2H2-type 15" evidence="3">
    <location>
        <begin position="606"/>
        <end position="628"/>
    </location>
</feature>
<feature type="zinc finger region" description="C2H2-type 16" evidence="3">
    <location>
        <begin position="634"/>
        <end position="656"/>
    </location>
</feature>
<feature type="zinc finger region" description="C2H2-type 17" evidence="3">
    <location>
        <begin position="662"/>
        <end position="684"/>
    </location>
</feature>
<feature type="zinc finger region" description="C2H2-type 18" evidence="3">
    <location>
        <begin position="690"/>
        <end position="712"/>
    </location>
</feature>
<feature type="cross-link" description="Glycyl lysine isopeptide (Lys-Gly) (interchain with G-Cter in SUMO2)" evidence="2">
    <location>
        <position position="204"/>
    </location>
</feature>
<dbReference type="EMBL" id="AC010487">
    <property type="status" value="NOT_ANNOTATED_CDS"/>
    <property type="molecule type" value="Genomic_DNA"/>
</dbReference>
<dbReference type="CCDS" id="CCDS86801.1"/>
<dbReference type="RefSeq" id="NP_001297056.1">
    <property type="nucleotide sequence ID" value="NM_001310127.2"/>
</dbReference>
<dbReference type="RefSeq" id="NP_001371582.1">
    <property type="nucleotide sequence ID" value="NM_001384653.1"/>
</dbReference>
<dbReference type="RefSeq" id="NP_001380867.1">
    <property type="nucleotide sequence ID" value="NM_001393938.1"/>
</dbReference>
<dbReference type="RefSeq" id="XP_005259508.1">
    <property type="nucleotide sequence ID" value="XM_005259451.4"/>
</dbReference>
<dbReference type="RefSeq" id="XP_016882288.1">
    <property type="nucleotide sequence ID" value="XM_017026799.1"/>
</dbReference>
<dbReference type="RefSeq" id="XP_054176944.1">
    <property type="nucleotide sequence ID" value="XM_054320969.1"/>
</dbReference>
<dbReference type="SMR" id="P0CJ79"/>
<dbReference type="FunCoup" id="P0CJ79">
    <property type="interactions" value="80"/>
</dbReference>
<dbReference type="IntAct" id="P0CJ79">
    <property type="interactions" value="9"/>
</dbReference>
<dbReference type="STRING" id="9606.ENSP00000491567"/>
<dbReference type="GlyGen" id="P0CJ79">
    <property type="glycosylation" value="1 site, 1 O-linked glycan (1 site)"/>
</dbReference>
<dbReference type="iPTMnet" id="P0CJ79"/>
<dbReference type="PhosphoSitePlus" id="P0CJ79"/>
<dbReference type="BioMuta" id="ZNF888"/>
<dbReference type="DMDM" id="322967617"/>
<dbReference type="jPOST" id="P0CJ79"/>
<dbReference type="MassIVE" id="P0CJ79"/>
<dbReference type="PeptideAtlas" id="P0CJ79"/>
<dbReference type="ProteomicsDB" id="52493"/>
<dbReference type="Pumba" id="P0CJ79"/>
<dbReference type="DNASU" id="388559"/>
<dbReference type="Ensembl" id="ENST00000638862.2">
    <property type="protein sequence ID" value="ENSP00000491567.1"/>
    <property type="gene ID" value="ENSG00000213793.6"/>
</dbReference>
<dbReference type="GeneID" id="388559"/>
<dbReference type="KEGG" id="hsa:388559"/>
<dbReference type="MANE-Select" id="ENST00000638862.2">
    <property type="protein sequence ID" value="ENSP00000491567.1"/>
    <property type="RefSeq nucleotide sequence ID" value="NM_001393938.1"/>
    <property type="RefSeq protein sequence ID" value="NP_001380867.1"/>
</dbReference>
<dbReference type="AGR" id="HGNC:38695"/>
<dbReference type="CTD" id="388559"/>
<dbReference type="GeneCards" id="ZNF888"/>
<dbReference type="HGNC" id="HGNC:38695">
    <property type="gene designation" value="ZNF888"/>
</dbReference>
<dbReference type="HPA" id="ENSG00000213793">
    <property type="expression patterns" value="Low tissue specificity"/>
</dbReference>
<dbReference type="neXtProt" id="NX_P0CJ79"/>
<dbReference type="VEuPathDB" id="HostDB:ENSG00000213793"/>
<dbReference type="GeneTree" id="ENSGT00940000154397"/>
<dbReference type="InParanoid" id="P0CJ79"/>
<dbReference type="OMA" id="SQLACHH"/>
<dbReference type="OrthoDB" id="3437960at2759"/>
<dbReference type="PAN-GO" id="P0CJ79">
    <property type="GO annotations" value="4 GO annotations based on evolutionary models"/>
</dbReference>
<dbReference type="PhylomeDB" id="P0CJ79"/>
<dbReference type="PathwayCommons" id="P0CJ79"/>
<dbReference type="SignaLink" id="P0CJ79"/>
<dbReference type="ChiTaRS" id="ZNF888">
    <property type="organism name" value="human"/>
</dbReference>
<dbReference type="GenomeRNAi" id="388559"/>
<dbReference type="Pharos" id="P0CJ79">
    <property type="development level" value="Tdark"/>
</dbReference>
<dbReference type="PRO" id="PR:P0CJ79"/>
<dbReference type="Proteomes" id="UP000005640">
    <property type="component" value="Chromosome 19"/>
</dbReference>
<dbReference type="RNAct" id="P0CJ79">
    <property type="molecule type" value="protein"/>
</dbReference>
<dbReference type="Bgee" id="ENSG00000213793">
    <property type="expression patterns" value="Expressed in cerebellar vermis and 106 other cell types or tissues"/>
</dbReference>
<dbReference type="GO" id="GO:0005634">
    <property type="term" value="C:nucleus"/>
    <property type="evidence" value="ECO:0000318"/>
    <property type="project" value="GO_Central"/>
</dbReference>
<dbReference type="GO" id="GO:0000981">
    <property type="term" value="F:DNA-binding transcription factor activity, RNA polymerase II-specific"/>
    <property type="evidence" value="ECO:0000318"/>
    <property type="project" value="GO_Central"/>
</dbReference>
<dbReference type="GO" id="GO:0000978">
    <property type="term" value="F:RNA polymerase II cis-regulatory region sequence-specific DNA binding"/>
    <property type="evidence" value="ECO:0000318"/>
    <property type="project" value="GO_Central"/>
</dbReference>
<dbReference type="GO" id="GO:0008270">
    <property type="term" value="F:zinc ion binding"/>
    <property type="evidence" value="ECO:0007669"/>
    <property type="project" value="UniProtKB-KW"/>
</dbReference>
<dbReference type="GO" id="GO:0006357">
    <property type="term" value="P:regulation of transcription by RNA polymerase II"/>
    <property type="evidence" value="ECO:0000318"/>
    <property type="project" value="GO_Central"/>
</dbReference>
<dbReference type="CDD" id="cd07765">
    <property type="entry name" value="KRAB_A-box"/>
    <property type="match status" value="1"/>
</dbReference>
<dbReference type="FunFam" id="3.30.160.60:FF:004137">
    <property type="match status" value="3"/>
</dbReference>
<dbReference type="FunFam" id="3.30.160.60:FF:003288">
    <property type="entry name" value="Uncharacterized protein"/>
    <property type="match status" value="1"/>
</dbReference>
<dbReference type="FunFam" id="3.30.160.60:FF:000258">
    <property type="entry name" value="zinc finger and SCAN domain-containing protein 29 isoform X2"/>
    <property type="match status" value="1"/>
</dbReference>
<dbReference type="FunFam" id="3.30.160.60:FF:000992">
    <property type="entry name" value="Zinc finger protein 320"/>
    <property type="match status" value="4"/>
</dbReference>
<dbReference type="FunFam" id="3.30.160.60:FF:002343">
    <property type="entry name" value="Zinc finger protein 33A"/>
    <property type="match status" value="1"/>
</dbReference>
<dbReference type="FunFam" id="3.30.160.60:FF:002402">
    <property type="entry name" value="Zinc finger protein 347"/>
    <property type="match status" value="3"/>
</dbReference>
<dbReference type="FunFam" id="3.30.160.60:FF:000690">
    <property type="entry name" value="Zinc finger protein 354C"/>
    <property type="match status" value="1"/>
</dbReference>
<dbReference type="FunFam" id="3.30.160.60:FF:002090">
    <property type="entry name" value="Zinc finger protein 473"/>
    <property type="match status" value="2"/>
</dbReference>
<dbReference type="FunFam" id="3.30.160.60:FF:000454">
    <property type="entry name" value="Zinc finger protein 624"/>
    <property type="match status" value="1"/>
</dbReference>
<dbReference type="FunFam" id="3.30.160.60:FF:002289">
    <property type="entry name" value="Zinc finger protein 813"/>
    <property type="match status" value="1"/>
</dbReference>
<dbReference type="FunFam" id="3.30.160.60:FF:002292">
    <property type="entry name" value="Zinc finger protein 816"/>
    <property type="match status" value="1"/>
</dbReference>
<dbReference type="FunFam" id="3.30.160.60:FF:000416">
    <property type="entry name" value="zinc finger protein 879 isoform X1"/>
    <property type="match status" value="2"/>
</dbReference>
<dbReference type="Gene3D" id="6.10.140.140">
    <property type="match status" value="1"/>
</dbReference>
<dbReference type="Gene3D" id="3.30.160.60">
    <property type="entry name" value="Classic Zinc Finger"/>
    <property type="match status" value="18"/>
</dbReference>
<dbReference type="InterPro" id="IPR001909">
    <property type="entry name" value="KRAB"/>
</dbReference>
<dbReference type="InterPro" id="IPR036051">
    <property type="entry name" value="KRAB_dom_sf"/>
</dbReference>
<dbReference type="InterPro" id="IPR036236">
    <property type="entry name" value="Znf_C2H2_sf"/>
</dbReference>
<dbReference type="InterPro" id="IPR013087">
    <property type="entry name" value="Znf_C2H2_type"/>
</dbReference>
<dbReference type="PANTHER" id="PTHR23235:SF178">
    <property type="entry name" value="C2H2-TYPE DOMAIN-CONTAINING PROTEIN-RELATED"/>
    <property type="match status" value="1"/>
</dbReference>
<dbReference type="PANTHER" id="PTHR23235">
    <property type="entry name" value="KRUEPPEL-LIKE TRANSCRIPTION FACTOR"/>
    <property type="match status" value="1"/>
</dbReference>
<dbReference type="Pfam" id="PF01352">
    <property type="entry name" value="KRAB"/>
    <property type="match status" value="1"/>
</dbReference>
<dbReference type="Pfam" id="PF00096">
    <property type="entry name" value="zf-C2H2"/>
    <property type="match status" value="15"/>
</dbReference>
<dbReference type="SMART" id="SM00349">
    <property type="entry name" value="KRAB"/>
    <property type="match status" value="1"/>
</dbReference>
<dbReference type="SMART" id="SM00355">
    <property type="entry name" value="ZnF_C2H2"/>
    <property type="match status" value="17"/>
</dbReference>
<dbReference type="SUPFAM" id="SSF57667">
    <property type="entry name" value="beta-beta-alpha zinc fingers"/>
    <property type="match status" value="10"/>
</dbReference>
<dbReference type="SUPFAM" id="SSF109640">
    <property type="entry name" value="KRAB domain (Kruppel-associated box)"/>
    <property type="match status" value="1"/>
</dbReference>
<dbReference type="PROSITE" id="PS50805">
    <property type="entry name" value="KRAB"/>
    <property type="match status" value="1"/>
</dbReference>
<dbReference type="PROSITE" id="PS00028">
    <property type="entry name" value="ZINC_FINGER_C2H2_1"/>
    <property type="match status" value="17"/>
</dbReference>
<dbReference type="PROSITE" id="PS50157">
    <property type="entry name" value="ZINC_FINGER_C2H2_2"/>
    <property type="match status" value="18"/>
</dbReference>
<accession>P0CJ79</accession>
<accession>A0A1W2PQ69</accession>
<reference key="1">
    <citation type="journal article" date="2004" name="Nature">
        <title>The DNA sequence and biology of human chromosome 19.</title>
        <authorList>
            <person name="Grimwood J."/>
            <person name="Gordon L.A."/>
            <person name="Olsen A.S."/>
            <person name="Terry A."/>
            <person name="Schmutz J."/>
            <person name="Lamerdin J.E."/>
            <person name="Hellsten U."/>
            <person name="Goodstein D."/>
            <person name="Couronne O."/>
            <person name="Tran-Gyamfi M."/>
            <person name="Aerts A."/>
            <person name="Altherr M."/>
            <person name="Ashworth L."/>
            <person name="Bajorek E."/>
            <person name="Black S."/>
            <person name="Branscomb E."/>
            <person name="Caenepeel S."/>
            <person name="Carrano A.V."/>
            <person name="Caoile C."/>
            <person name="Chan Y.M."/>
            <person name="Christensen M."/>
            <person name="Cleland C.A."/>
            <person name="Copeland A."/>
            <person name="Dalin E."/>
            <person name="Dehal P."/>
            <person name="Denys M."/>
            <person name="Detter J.C."/>
            <person name="Escobar J."/>
            <person name="Flowers D."/>
            <person name="Fotopulos D."/>
            <person name="Garcia C."/>
            <person name="Georgescu A.M."/>
            <person name="Glavina T."/>
            <person name="Gomez M."/>
            <person name="Gonzales E."/>
            <person name="Groza M."/>
            <person name="Hammon N."/>
            <person name="Hawkins T."/>
            <person name="Haydu L."/>
            <person name="Ho I."/>
            <person name="Huang W."/>
            <person name="Israni S."/>
            <person name="Jett J."/>
            <person name="Kadner K."/>
            <person name="Kimball H."/>
            <person name="Kobayashi A."/>
            <person name="Larionov V."/>
            <person name="Leem S.-H."/>
            <person name="Lopez F."/>
            <person name="Lou Y."/>
            <person name="Lowry S."/>
            <person name="Malfatti S."/>
            <person name="Martinez D."/>
            <person name="McCready P.M."/>
            <person name="Medina C."/>
            <person name="Morgan J."/>
            <person name="Nelson K."/>
            <person name="Nolan M."/>
            <person name="Ovcharenko I."/>
            <person name="Pitluck S."/>
            <person name="Pollard M."/>
            <person name="Popkie A.P."/>
            <person name="Predki P."/>
            <person name="Quan G."/>
            <person name="Ramirez L."/>
            <person name="Rash S."/>
            <person name="Retterer J."/>
            <person name="Rodriguez A."/>
            <person name="Rogers S."/>
            <person name="Salamov A."/>
            <person name="Salazar A."/>
            <person name="She X."/>
            <person name="Smith D."/>
            <person name="Slezak T."/>
            <person name="Solovyev V."/>
            <person name="Thayer N."/>
            <person name="Tice H."/>
            <person name="Tsai M."/>
            <person name="Ustaszewska A."/>
            <person name="Vo N."/>
            <person name="Wagner M."/>
            <person name="Wheeler J."/>
            <person name="Wu K."/>
            <person name="Xie G."/>
            <person name="Yang J."/>
            <person name="Dubchak I."/>
            <person name="Furey T.S."/>
            <person name="DeJong P."/>
            <person name="Dickson M."/>
            <person name="Gordon D."/>
            <person name="Eichler E.E."/>
            <person name="Pennacchio L.A."/>
            <person name="Richardson P."/>
            <person name="Stubbs L."/>
            <person name="Rokhsar D.S."/>
            <person name="Myers R.M."/>
            <person name="Rubin E.M."/>
            <person name="Lucas S.M."/>
        </authorList>
    </citation>
    <scope>NUCLEOTIDE SEQUENCE [LARGE SCALE GENOMIC DNA]</scope>
</reference>